<gene>
    <name type="primary">ESFL5</name>
    <name type="ordered locus">At4g15953</name>
    <name type="ORF">FCAALL</name>
</gene>
<evidence type="ECO:0000250" key="1"/>
<evidence type="ECO:0000255" key="2"/>
<evidence type="ECO:0000269" key="3">
    <source>
    </source>
</evidence>
<evidence type="ECO:0000305" key="4"/>
<feature type="signal peptide" evidence="2">
    <location>
        <begin position="1"/>
        <end position="22"/>
    </location>
</feature>
<feature type="chain" id="PRO_0000430066" description="EMBRYO SURROUNDING FACTOR 1-like protein 5">
    <location>
        <begin position="23"/>
        <end position="107"/>
    </location>
</feature>
<feature type="transmembrane region" description="Helical" evidence="2">
    <location>
        <begin position="87"/>
        <end position="107"/>
    </location>
</feature>
<feature type="disulfide bond" evidence="1">
    <location>
        <begin position="35"/>
        <end position="49"/>
    </location>
</feature>
<feature type="disulfide bond" evidence="1">
    <location>
        <begin position="40"/>
        <end position="69"/>
    </location>
</feature>
<feature type="disulfide bond" evidence="1">
    <location>
        <begin position="47"/>
        <end position="65"/>
    </location>
</feature>
<feature type="disulfide bond" evidence="1">
    <location>
        <begin position="50"/>
        <end position="58"/>
    </location>
</feature>
<accession>A8MQA4</accession>
<sequence>MSLLRFAILCIIFVSLFGVHECFRGEKINVPAHPCYHTLCGSMIRNCYCCLGKKFDYCSPNQQNCLFRCEEVNRIPDFPKTNGVSKGLGPPIYLFFLGQFIYFVLGL</sequence>
<reference key="1">
    <citation type="journal article" date="1999" name="Nature">
        <title>Sequence and analysis of chromosome 4 of the plant Arabidopsis thaliana.</title>
        <authorList>
            <person name="Mayer K.F.X."/>
            <person name="Schueller C."/>
            <person name="Wambutt R."/>
            <person name="Murphy G."/>
            <person name="Volckaert G."/>
            <person name="Pohl T."/>
            <person name="Duesterhoeft A."/>
            <person name="Stiekema W."/>
            <person name="Entian K.-D."/>
            <person name="Terryn N."/>
            <person name="Harris B."/>
            <person name="Ansorge W."/>
            <person name="Brandt P."/>
            <person name="Grivell L.A."/>
            <person name="Rieger M."/>
            <person name="Weichselgartner M."/>
            <person name="de Simone V."/>
            <person name="Obermaier B."/>
            <person name="Mache R."/>
            <person name="Mueller M."/>
            <person name="Kreis M."/>
            <person name="Delseny M."/>
            <person name="Puigdomenech P."/>
            <person name="Watson M."/>
            <person name="Schmidtheini T."/>
            <person name="Reichert B."/>
            <person name="Portetelle D."/>
            <person name="Perez-Alonso M."/>
            <person name="Boutry M."/>
            <person name="Bancroft I."/>
            <person name="Vos P."/>
            <person name="Hoheisel J."/>
            <person name="Zimmermann W."/>
            <person name="Wedler H."/>
            <person name="Ridley P."/>
            <person name="Langham S.-A."/>
            <person name="McCullagh B."/>
            <person name="Bilham L."/>
            <person name="Robben J."/>
            <person name="van der Schueren J."/>
            <person name="Grymonprez B."/>
            <person name="Chuang Y.-J."/>
            <person name="Vandenbussche F."/>
            <person name="Braeken M."/>
            <person name="Weltjens I."/>
            <person name="Voet M."/>
            <person name="Bastiaens I."/>
            <person name="Aert R."/>
            <person name="Defoor E."/>
            <person name="Weitzenegger T."/>
            <person name="Bothe G."/>
            <person name="Ramsperger U."/>
            <person name="Hilbert H."/>
            <person name="Braun M."/>
            <person name="Holzer E."/>
            <person name="Brandt A."/>
            <person name="Peters S."/>
            <person name="van Staveren M."/>
            <person name="Dirkse W."/>
            <person name="Mooijman P."/>
            <person name="Klein Lankhorst R."/>
            <person name="Rose M."/>
            <person name="Hauf J."/>
            <person name="Koetter P."/>
            <person name="Berneiser S."/>
            <person name="Hempel S."/>
            <person name="Feldpausch M."/>
            <person name="Lamberth S."/>
            <person name="Van den Daele H."/>
            <person name="De Keyser A."/>
            <person name="Buysshaert C."/>
            <person name="Gielen J."/>
            <person name="Villarroel R."/>
            <person name="De Clercq R."/>
            <person name="van Montagu M."/>
            <person name="Rogers J."/>
            <person name="Cronin A."/>
            <person name="Quail M.A."/>
            <person name="Bray-Allen S."/>
            <person name="Clark L."/>
            <person name="Doggett J."/>
            <person name="Hall S."/>
            <person name="Kay M."/>
            <person name="Lennard N."/>
            <person name="McLay K."/>
            <person name="Mayes R."/>
            <person name="Pettett A."/>
            <person name="Rajandream M.A."/>
            <person name="Lyne M."/>
            <person name="Benes V."/>
            <person name="Rechmann S."/>
            <person name="Borkova D."/>
            <person name="Bloecker H."/>
            <person name="Scharfe M."/>
            <person name="Grimm M."/>
            <person name="Loehnert T.-H."/>
            <person name="Dose S."/>
            <person name="de Haan M."/>
            <person name="Maarse A.C."/>
            <person name="Schaefer M."/>
            <person name="Mueller-Auer S."/>
            <person name="Gabel C."/>
            <person name="Fuchs M."/>
            <person name="Fartmann B."/>
            <person name="Granderath K."/>
            <person name="Dauner D."/>
            <person name="Herzl A."/>
            <person name="Neumann S."/>
            <person name="Argiriou A."/>
            <person name="Vitale D."/>
            <person name="Liguori R."/>
            <person name="Piravandi E."/>
            <person name="Massenet O."/>
            <person name="Quigley F."/>
            <person name="Clabauld G."/>
            <person name="Muendlein A."/>
            <person name="Felber R."/>
            <person name="Schnabl S."/>
            <person name="Hiller R."/>
            <person name="Schmidt W."/>
            <person name="Lecharny A."/>
            <person name="Aubourg S."/>
            <person name="Chefdor F."/>
            <person name="Cooke R."/>
            <person name="Berger C."/>
            <person name="Monfort A."/>
            <person name="Casacuberta E."/>
            <person name="Gibbons T."/>
            <person name="Weber N."/>
            <person name="Vandenbol M."/>
            <person name="Bargues M."/>
            <person name="Terol J."/>
            <person name="Torres A."/>
            <person name="Perez-Perez A."/>
            <person name="Purnelle B."/>
            <person name="Bent E."/>
            <person name="Johnson S."/>
            <person name="Tacon D."/>
            <person name="Jesse T."/>
            <person name="Heijnen L."/>
            <person name="Schwarz S."/>
            <person name="Scholler P."/>
            <person name="Heber S."/>
            <person name="Francs P."/>
            <person name="Bielke C."/>
            <person name="Frishman D."/>
            <person name="Haase D."/>
            <person name="Lemcke K."/>
            <person name="Mewes H.-W."/>
            <person name="Stocker S."/>
            <person name="Zaccaria P."/>
            <person name="Bevan M."/>
            <person name="Wilson R.K."/>
            <person name="de la Bastide M."/>
            <person name="Habermann K."/>
            <person name="Parnell L."/>
            <person name="Dedhia N."/>
            <person name="Gnoj L."/>
            <person name="Schutz K."/>
            <person name="Huang E."/>
            <person name="Spiegel L."/>
            <person name="Sekhon M."/>
            <person name="Murray J."/>
            <person name="Sheet P."/>
            <person name="Cordes M."/>
            <person name="Abu-Threideh J."/>
            <person name="Stoneking T."/>
            <person name="Kalicki J."/>
            <person name="Graves T."/>
            <person name="Harmon G."/>
            <person name="Edwards J."/>
            <person name="Latreille P."/>
            <person name="Courtney L."/>
            <person name="Cloud J."/>
            <person name="Abbott A."/>
            <person name="Scott K."/>
            <person name="Johnson D."/>
            <person name="Minx P."/>
            <person name="Bentley D."/>
            <person name="Fulton B."/>
            <person name="Miller N."/>
            <person name="Greco T."/>
            <person name="Kemp K."/>
            <person name="Kramer J."/>
            <person name="Fulton L."/>
            <person name="Mardis E."/>
            <person name="Dante M."/>
            <person name="Pepin K."/>
            <person name="Hillier L.W."/>
            <person name="Nelson J."/>
            <person name="Spieth J."/>
            <person name="Ryan E."/>
            <person name="Andrews S."/>
            <person name="Geisel C."/>
            <person name="Layman D."/>
            <person name="Du H."/>
            <person name="Ali J."/>
            <person name="Berghoff A."/>
            <person name="Jones K."/>
            <person name="Drone K."/>
            <person name="Cotton M."/>
            <person name="Joshu C."/>
            <person name="Antonoiu B."/>
            <person name="Zidanic M."/>
            <person name="Strong C."/>
            <person name="Sun H."/>
            <person name="Lamar B."/>
            <person name="Yordan C."/>
            <person name="Ma P."/>
            <person name="Zhong J."/>
            <person name="Preston R."/>
            <person name="Vil D."/>
            <person name="Shekher M."/>
            <person name="Matero A."/>
            <person name="Shah R."/>
            <person name="Swaby I.K."/>
            <person name="O'Shaughnessy A."/>
            <person name="Rodriguez M."/>
            <person name="Hoffman J."/>
            <person name="Till S."/>
            <person name="Granat S."/>
            <person name="Shohdy N."/>
            <person name="Hasegawa A."/>
            <person name="Hameed A."/>
            <person name="Lodhi M."/>
            <person name="Johnson A."/>
            <person name="Chen E."/>
            <person name="Marra M.A."/>
            <person name="Martienssen R."/>
            <person name="McCombie W.R."/>
        </authorList>
    </citation>
    <scope>NUCLEOTIDE SEQUENCE [LARGE SCALE GENOMIC DNA]</scope>
    <source>
        <strain>cv. Columbia</strain>
    </source>
</reference>
<reference key="2">
    <citation type="journal article" date="2017" name="Plant J.">
        <title>Araport11: a complete reannotation of the Arabidopsis thaliana reference genome.</title>
        <authorList>
            <person name="Cheng C.Y."/>
            <person name="Krishnakumar V."/>
            <person name="Chan A.P."/>
            <person name="Thibaud-Nissen F."/>
            <person name="Schobel S."/>
            <person name="Town C.D."/>
        </authorList>
    </citation>
    <scope>GENOME REANNOTATION</scope>
    <source>
        <strain>cv. Columbia</strain>
    </source>
</reference>
<reference key="3">
    <citation type="journal article" date="2014" name="Science">
        <title>Central cell-derived peptides regulate early embryo patterning in flowering plants.</title>
        <authorList>
            <person name="Costa L.M."/>
            <person name="Marshall E."/>
            <person name="Tesfaye M."/>
            <person name="Silverstein K.A."/>
            <person name="Mori M."/>
            <person name="Umetsu Y."/>
            <person name="Otterbach S.L."/>
            <person name="Papareddy R."/>
            <person name="Dickinson H.G."/>
            <person name="Boutiller K."/>
            <person name="VandenBosch K.A."/>
            <person name="Ohki S."/>
            <person name="Gutierrez-Marcos J.F."/>
        </authorList>
    </citation>
    <scope>IDENTIFICATION</scope>
    <scope>TISSUE SPECIFICITY</scope>
</reference>
<proteinExistence type="evidence at transcript level"/>
<keyword id="KW-1015">Disulfide bond</keyword>
<keyword id="KW-0472">Membrane</keyword>
<keyword id="KW-1185">Reference proteome</keyword>
<keyword id="KW-0732">Signal</keyword>
<keyword id="KW-0812">Transmembrane</keyword>
<keyword id="KW-1133">Transmembrane helix</keyword>
<protein>
    <recommendedName>
        <fullName>EMBRYO SURROUNDING FACTOR 1-like protein 5</fullName>
    </recommendedName>
</protein>
<name>ESFL5_ARATH</name>
<organism>
    <name type="scientific">Arabidopsis thaliana</name>
    <name type="common">Mouse-ear cress</name>
    <dbReference type="NCBI Taxonomy" id="3702"/>
    <lineage>
        <taxon>Eukaryota</taxon>
        <taxon>Viridiplantae</taxon>
        <taxon>Streptophyta</taxon>
        <taxon>Embryophyta</taxon>
        <taxon>Tracheophyta</taxon>
        <taxon>Spermatophyta</taxon>
        <taxon>Magnoliopsida</taxon>
        <taxon>eudicotyledons</taxon>
        <taxon>Gunneridae</taxon>
        <taxon>Pentapetalae</taxon>
        <taxon>rosids</taxon>
        <taxon>malvids</taxon>
        <taxon>Brassicales</taxon>
        <taxon>Brassicaceae</taxon>
        <taxon>Camelineae</taxon>
        <taxon>Arabidopsis</taxon>
    </lineage>
</organism>
<dbReference type="EMBL" id="AL161542">
    <property type="status" value="NOT_ANNOTATED_CDS"/>
    <property type="molecule type" value="Genomic_DNA"/>
</dbReference>
<dbReference type="EMBL" id="CP002687">
    <property type="protein sequence ID" value="AEE83670.1"/>
    <property type="molecule type" value="Genomic_DNA"/>
</dbReference>
<dbReference type="RefSeq" id="NP_001078397.1">
    <property type="nucleotide sequence ID" value="NM_001084928.2"/>
</dbReference>
<dbReference type="FunCoup" id="A8MQA4">
    <property type="interactions" value="1"/>
</dbReference>
<dbReference type="PaxDb" id="3702-AT4G15953.1"/>
<dbReference type="EnsemblPlants" id="AT4G15953.1">
    <property type="protein sequence ID" value="AT4G15953.1"/>
    <property type="gene ID" value="AT4G15953"/>
</dbReference>
<dbReference type="GeneID" id="5008144"/>
<dbReference type="Gramene" id="AT4G15953.1">
    <property type="protein sequence ID" value="AT4G15953.1"/>
    <property type="gene ID" value="AT4G15953"/>
</dbReference>
<dbReference type="KEGG" id="ath:AT4G15953"/>
<dbReference type="Araport" id="AT4G15953"/>
<dbReference type="TAIR" id="AT4G15953"/>
<dbReference type="HOGENOM" id="CLU_2213564_0_0_1"/>
<dbReference type="InParanoid" id="A8MQA4"/>
<dbReference type="OMA" id="IRNCYCC"/>
<dbReference type="PhylomeDB" id="A8MQA4"/>
<dbReference type="PRO" id="PR:A8MQA4"/>
<dbReference type="Proteomes" id="UP000006548">
    <property type="component" value="Chromosome 4"/>
</dbReference>
<dbReference type="ExpressionAtlas" id="A8MQA4">
    <property type="expression patterns" value="baseline and differential"/>
</dbReference>
<dbReference type="GO" id="GO:0016020">
    <property type="term" value="C:membrane"/>
    <property type="evidence" value="ECO:0007669"/>
    <property type="project" value="UniProtKB-SubCell"/>
</dbReference>
<comment type="subcellular location">
    <subcellularLocation>
        <location evidence="4">Membrane</location>
        <topology evidence="4">Single-pass membrane protein</topology>
    </subcellularLocation>
</comment>
<comment type="tissue specificity">
    <text evidence="3">Expressed in flowers.</text>
</comment>
<comment type="similarity">
    <text evidence="4">Belongs to the MEG family.</text>
</comment>